<proteinExistence type="inferred from homology"/>
<feature type="chain" id="PRO_0000264585" description="Phosphoribosylformylglycinamidine synthase">
    <location>
        <begin position="1"/>
        <end position="1295"/>
    </location>
</feature>
<feature type="domain" description="Glutamine amidotransferase type-1" evidence="1">
    <location>
        <begin position="1042"/>
        <end position="1295"/>
    </location>
</feature>
<feature type="region of interest" description="Disordered" evidence="2">
    <location>
        <begin position="302"/>
        <end position="327"/>
    </location>
</feature>
<feature type="active site" description="Nucleophile" evidence="1">
    <location>
        <position position="1135"/>
    </location>
</feature>
<feature type="active site" evidence="1">
    <location>
        <position position="1260"/>
    </location>
</feature>
<feature type="active site" evidence="1">
    <location>
        <position position="1262"/>
    </location>
</feature>
<feature type="binding site" evidence="1">
    <location>
        <begin position="306"/>
        <end position="317"/>
    </location>
    <ligand>
        <name>ATP</name>
        <dbReference type="ChEBI" id="CHEBI:30616"/>
    </ligand>
</feature>
<feature type="binding site" evidence="1">
    <location>
        <position position="677"/>
    </location>
    <ligand>
        <name>ATP</name>
        <dbReference type="ChEBI" id="CHEBI:30616"/>
    </ligand>
</feature>
<feature type="binding site" evidence="1">
    <location>
        <position position="678"/>
    </location>
    <ligand>
        <name>Mg(2+)</name>
        <dbReference type="ChEBI" id="CHEBI:18420"/>
    </ligand>
</feature>
<feature type="binding site" evidence="1">
    <location>
        <position position="717"/>
    </location>
    <ligand>
        <name>Mg(2+)</name>
        <dbReference type="ChEBI" id="CHEBI:18420"/>
    </ligand>
</feature>
<feature type="binding site" evidence="1">
    <location>
        <position position="721"/>
    </location>
    <ligand>
        <name>Mg(2+)</name>
        <dbReference type="ChEBI" id="CHEBI:18420"/>
    </ligand>
</feature>
<feature type="binding site" evidence="1">
    <location>
        <position position="884"/>
    </location>
    <ligand>
        <name>Mg(2+)</name>
        <dbReference type="ChEBI" id="CHEBI:18420"/>
    </ligand>
</feature>
<feature type="binding site" evidence="1">
    <location>
        <position position="886"/>
    </location>
    <ligand>
        <name>ATP</name>
        <dbReference type="ChEBI" id="CHEBI:30616"/>
    </ligand>
</feature>
<sequence length="1295" mass="140706">MLVLRGAPALSEFRTKKLMQSIEALNLPVHALFAEFVHFAQVSAQLEANDQQVLDKLLTYGPKIQEKQHKGLLLLVIPRAGTISPWSSKATDIAHNCGLNNVERLERGCAFYIDADPLNDTQLIQLKNVLHDRMTQSVVSDLQDASILFKHEAPKPLTSIDVLGGGREELVSANVRLGLALAEDEVDYLVSSFEKLGRNPNDIELYMFAQANSEHCRHKIFNADWTIDGQTQPKSLFKMIKNTYEKCPDYVHSAYADNAAVMEGSFAGRFFPQADNNQYRYHHEDIDILMKVETHNHPTAIAPFSGAATGSGGEIRDEGATGRGSKPKAGLVGFSVSNLRIPGFEQPWENDYGKPERIVTAFDIMLNGPLGGAAFNNEFGRPNILGYFRTYEQKVTSFNGEEVRGYHKPIMLAGGLGNIRKQHTQKGEITVGAKLIALGGPAMNIGLGGGAASSMASGESNEDLDFASVQRDNPEMERRCQEVIDKCWQLGENNPIQFIHDVGAGGLSNAFPELVNDGGRGAVFSLRNVPNDEPGMTPLEVWCNESQERYVMSVAPENLATFTDICARERAPFAVVGEATQARHLTLDDSHFNNKPIDMPLDVLLGKAPKMHRDVQSKALTGNAFDVSNIDLDEAALRLLHLPAVAEKTFLITIGDRSVTGLVNRDQMVGPWQIPVADVAVTAAAFDTYQGEAMSLGERTPAALLNYGASARLAVGEALTNIAAADIGDLKRIKLSANWMAAAGHPGEDAGLYEAVKAVGEELCPALGLTIPVGKDSMSMKTQWQDAQGDKAVTSPMSLVITAFGAVKDVRKTLTPELTTKGDTCLMLIDLGAGQNRMGASCLAQVYQQLGDKTPDVDSPELLKGFFLAIQQLVNEKALHAYHDRSDGGLFTTLVEMAFAGNTGLDIKLDALTGDNASALFNEELGAVIQFDADKLNQVDAILAANGLSGVSHVIGTLSDDDQIRFSREGEPVLQNSRGVYRNAWAQTTHHMQRLRDNPECAEQELASKNDLNNPGLHAALSFDVTEDVAAPYIAKGIAPKMAILREQGVNSHVEMAAAFDRAGFASVDVHMSDILAGRVSLSEFQGLVACGGFSYGDVLGAGEGWAKSILFNAMARDEFSAFFERNETFSLGVCNGCQMLSNLKSLIPGAEHWPHFVTNQSERFEARVAMLEVKDSPSIFFKGMQGSKMPIAVSHGEGRAEFAQTTGLEAALDSNTIALQYVDNYGKVTEQYPANPNGSPAGISGLTSKDGRATIMMPHPERVFRTVANSWHPDDWQEDSPWMRMFRNARVYLG</sequence>
<evidence type="ECO:0000255" key="1">
    <source>
        <dbReference type="HAMAP-Rule" id="MF_00419"/>
    </source>
</evidence>
<evidence type="ECO:0000256" key="2">
    <source>
        <dbReference type="SAM" id="MobiDB-lite"/>
    </source>
</evidence>
<reference key="1">
    <citation type="submission" date="2006-06" db="EMBL/GenBank/DDBJ databases">
        <title>Complete sequence of Pseudoalteromonas atlantica T6c.</title>
        <authorList>
            <consortium name="US DOE Joint Genome Institute"/>
            <person name="Copeland A."/>
            <person name="Lucas S."/>
            <person name="Lapidus A."/>
            <person name="Barry K."/>
            <person name="Detter J.C."/>
            <person name="Glavina del Rio T."/>
            <person name="Hammon N."/>
            <person name="Israni S."/>
            <person name="Dalin E."/>
            <person name="Tice H."/>
            <person name="Pitluck S."/>
            <person name="Saunders E."/>
            <person name="Brettin T."/>
            <person name="Bruce D."/>
            <person name="Han C."/>
            <person name="Tapia R."/>
            <person name="Gilna P."/>
            <person name="Schmutz J."/>
            <person name="Larimer F."/>
            <person name="Land M."/>
            <person name="Hauser L."/>
            <person name="Kyrpides N."/>
            <person name="Kim E."/>
            <person name="Karls A.C."/>
            <person name="Bartlett D."/>
            <person name="Higgins B.P."/>
            <person name="Richardson P."/>
        </authorList>
    </citation>
    <scope>NUCLEOTIDE SEQUENCE [LARGE SCALE GENOMIC DNA]</scope>
    <source>
        <strain>T6c / ATCC BAA-1087</strain>
    </source>
</reference>
<protein>
    <recommendedName>
        <fullName evidence="1">Phosphoribosylformylglycinamidine synthase</fullName>
        <shortName evidence="1">FGAM synthase</shortName>
        <shortName evidence="1">FGAMS</shortName>
        <ecNumber evidence="1">6.3.5.3</ecNumber>
    </recommendedName>
    <alternativeName>
        <fullName evidence="1">Formylglycinamide ribonucleotide amidotransferase</fullName>
        <shortName evidence="1">FGAR amidotransferase</shortName>
        <shortName evidence="1">FGAR-AT</shortName>
    </alternativeName>
</protein>
<dbReference type="EC" id="6.3.5.3" evidence="1"/>
<dbReference type="EMBL" id="CP000388">
    <property type="protein sequence ID" value="ABG41619.1"/>
    <property type="molecule type" value="Genomic_DNA"/>
</dbReference>
<dbReference type="RefSeq" id="WP_011575857.1">
    <property type="nucleotide sequence ID" value="NC_008228.1"/>
</dbReference>
<dbReference type="SMR" id="Q15R69"/>
<dbReference type="STRING" id="342610.Patl_3113"/>
<dbReference type="KEGG" id="pat:Patl_3113"/>
<dbReference type="eggNOG" id="COG0046">
    <property type="taxonomic scope" value="Bacteria"/>
</dbReference>
<dbReference type="eggNOG" id="COG0047">
    <property type="taxonomic scope" value="Bacteria"/>
</dbReference>
<dbReference type="HOGENOM" id="CLU_001031_0_2_6"/>
<dbReference type="OrthoDB" id="9804441at2"/>
<dbReference type="UniPathway" id="UPA00074">
    <property type="reaction ID" value="UER00128"/>
</dbReference>
<dbReference type="Proteomes" id="UP000001981">
    <property type="component" value="Chromosome"/>
</dbReference>
<dbReference type="GO" id="GO:0005737">
    <property type="term" value="C:cytoplasm"/>
    <property type="evidence" value="ECO:0007669"/>
    <property type="project" value="UniProtKB-SubCell"/>
</dbReference>
<dbReference type="GO" id="GO:0005524">
    <property type="term" value="F:ATP binding"/>
    <property type="evidence" value="ECO:0007669"/>
    <property type="project" value="UniProtKB-UniRule"/>
</dbReference>
<dbReference type="GO" id="GO:0046872">
    <property type="term" value="F:metal ion binding"/>
    <property type="evidence" value="ECO:0007669"/>
    <property type="project" value="UniProtKB-KW"/>
</dbReference>
<dbReference type="GO" id="GO:0004642">
    <property type="term" value="F:phosphoribosylformylglycinamidine synthase activity"/>
    <property type="evidence" value="ECO:0007669"/>
    <property type="project" value="UniProtKB-UniRule"/>
</dbReference>
<dbReference type="GO" id="GO:0006189">
    <property type="term" value="P:'de novo' IMP biosynthetic process"/>
    <property type="evidence" value="ECO:0007669"/>
    <property type="project" value="UniProtKB-UniRule"/>
</dbReference>
<dbReference type="CDD" id="cd01740">
    <property type="entry name" value="GATase1_FGAR_AT"/>
    <property type="match status" value="1"/>
</dbReference>
<dbReference type="CDD" id="cd02203">
    <property type="entry name" value="PurL_repeat1"/>
    <property type="match status" value="1"/>
</dbReference>
<dbReference type="CDD" id="cd02204">
    <property type="entry name" value="PurL_repeat2"/>
    <property type="match status" value="1"/>
</dbReference>
<dbReference type="FunFam" id="1.10.8.750:FF:000002">
    <property type="entry name" value="Phosphoribosylformylglycinamidine synthase"/>
    <property type="match status" value="1"/>
</dbReference>
<dbReference type="FunFam" id="3.30.1330.10:FF:000002">
    <property type="entry name" value="Phosphoribosylformylglycinamidine synthase"/>
    <property type="match status" value="1"/>
</dbReference>
<dbReference type="FunFam" id="3.30.1330.10:FF:000005">
    <property type="entry name" value="Phosphoribosylformylglycinamidine synthase"/>
    <property type="match status" value="1"/>
</dbReference>
<dbReference type="FunFam" id="3.40.50.880:FF:000008">
    <property type="entry name" value="Phosphoribosylformylglycinamidine synthase"/>
    <property type="match status" value="1"/>
</dbReference>
<dbReference type="FunFam" id="3.90.650.10:FF:000002">
    <property type="entry name" value="Phosphoribosylformylglycinamidine synthase"/>
    <property type="match status" value="1"/>
</dbReference>
<dbReference type="FunFam" id="3.90.650.10:FF:000005">
    <property type="entry name" value="Phosphoribosylformylglycinamidine synthase"/>
    <property type="match status" value="1"/>
</dbReference>
<dbReference type="Gene3D" id="3.40.50.880">
    <property type="match status" value="1"/>
</dbReference>
<dbReference type="Gene3D" id="1.10.8.750">
    <property type="entry name" value="Phosphoribosylformylglycinamidine synthase, linker domain"/>
    <property type="match status" value="1"/>
</dbReference>
<dbReference type="Gene3D" id="3.90.650.10">
    <property type="entry name" value="PurM-like C-terminal domain"/>
    <property type="match status" value="2"/>
</dbReference>
<dbReference type="Gene3D" id="3.30.1330.10">
    <property type="entry name" value="PurM-like, N-terminal domain"/>
    <property type="match status" value="2"/>
</dbReference>
<dbReference type="HAMAP" id="MF_00419">
    <property type="entry name" value="PurL_1"/>
    <property type="match status" value="1"/>
</dbReference>
<dbReference type="InterPro" id="IPR029062">
    <property type="entry name" value="Class_I_gatase-like"/>
</dbReference>
<dbReference type="InterPro" id="IPR040707">
    <property type="entry name" value="FGAR-AT_N"/>
</dbReference>
<dbReference type="InterPro" id="IPR055181">
    <property type="entry name" value="FGAR-AT_PurM_N-like"/>
</dbReference>
<dbReference type="InterPro" id="IPR010073">
    <property type="entry name" value="PurL_large"/>
</dbReference>
<dbReference type="InterPro" id="IPR041609">
    <property type="entry name" value="PurL_linker"/>
</dbReference>
<dbReference type="InterPro" id="IPR010918">
    <property type="entry name" value="PurM-like_C_dom"/>
</dbReference>
<dbReference type="InterPro" id="IPR036676">
    <property type="entry name" value="PurM-like_C_sf"/>
</dbReference>
<dbReference type="InterPro" id="IPR036921">
    <property type="entry name" value="PurM-like_N_sf"/>
</dbReference>
<dbReference type="InterPro" id="IPR036604">
    <property type="entry name" value="PurS-like_sf"/>
</dbReference>
<dbReference type="NCBIfam" id="TIGR01735">
    <property type="entry name" value="FGAM_synt"/>
    <property type="match status" value="1"/>
</dbReference>
<dbReference type="NCBIfam" id="NF003672">
    <property type="entry name" value="PRK05297.1"/>
    <property type="match status" value="1"/>
</dbReference>
<dbReference type="PANTHER" id="PTHR10099">
    <property type="entry name" value="PHOSPHORIBOSYLFORMYLGLYCINAMIDINE SYNTHASE"/>
    <property type="match status" value="1"/>
</dbReference>
<dbReference type="PANTHER" id="PTHR10099:SF1">
    <property type="entry name" value="PHOSPHORIBOSYLFORMYLGLYCINAMIDINE SYNTHASE"/>
    <property type="match status" value="1"/>
</dbReference>
<dbReference type="Pfam" id="PF02769">
    <property type="entry name" value="AIRS_C"/>
    <property type="match status" value="2"/>
</dbReference>
<dbReference type="Pfam" id="PF18072">
    <property type="entry name" value="FGAR-AT_linker"/>
    <property type="match status" value="1"/>
</dbReference>
<dbReference type="Pfam" id="PF18076">
    <property type="entry name" value="FGAR-AT_N"/>
    <property type="match status" value="1"/>
</dbReference>
<dbReference type="Pfam" id="PF22689">
    <property type="entry name" value="FGAR-AT_PurM_N-like"/>
    <property type="match status" value="1"/>
</dbReference>
<dbReference type="Pfam" id="PF13507">
    <property type="entry name" value="GATase_5"/>
    <property type="match status" value="1"/>
</dbReference>
<dbReference type="SMART" id="SM01211">
    <property type="entry name" value="GATase_5"/>
    <property type="match status" value="1"/>
</dbReference>
<dbReference type="SUPFAM" id="SSF52317">
    <property type="entry name" value="Class I glutamine amidotransferase-like"/>
    <property type="match status" value="1"/>
</dbReference>
<dbReference type="SUPFAM" id="SSF109736">
    <property type="entry name" value="FGAM synthase PurL, linker domain"/>
    <property type="match status" value="1"/>
</dbReference>
<dbReference type="SUPFAM" id="SSF56042">
    <property type="entry name" value="PurM C-terminal domain-like"/>
    <property type="match status" value="2"/>
</dbReference>
<dbReference type="SUPFAM" id="SSF55326">
    <property type="entry name" value="PurM N-terminal domain-like"/>
    <property type="match status" value="2"/>
</dbReference>
<dbReference type="SUPFAM" id="SSF82697">
    <property type="entry name" value="PurS-like"/>
    <property type="match status" value="1"/>
</dbReference>
<dbReference type="PROSITE" id="PS51273">
    <property type="entry name" value="GATASE_TYPE_1"/>
    <property type="match status" value="1"/>
</dbReference>
<accession>Q15R69</accession>
<organism>
    <name type="scientific">Pseudoalteromonas atlantica (strain T6c / ATCC BAA-1087)</name>
    <dbReference type="NCBI Taxonomy" id="3042615"/>
    <lineage>
        <taxon>Bacteria</taxon>
        <taxon>Pseudomonadati</taxon>
        <taxon>Pseudomonadota</taxon>
        <taxon>Gammaproteobacteria</taxon>
        <taxon>Alteromonadales</taxon>
        <taxon>Alteromonadaceae</taxon>
        <taxon>Paraglaciecola</taxon>
    </lineage>
</organism>
<comment type="function">
    <text evidence="1">Phosphoribosylformylglycinamidine synthase involved in the purines biosynthetic pathway. Catalyzes the ATP-dependent conversion of formylglycinamide ribonucleotide (FGAR) and glutamine to yield formylglycinamidine ribonucleotide (FGAM) and glutamate.</text>
</comment>
<comment type="catalytic activity">
    <reaction evidence="1">
        <text>N(2)-formyl-N(1)-(5-phospho-beta-D-ribosyl)glycinamide + L-glutamine + ATP + H2O = 2-formamido-N(1)-(5-O-phospho-beta-D-ribosyl)acetamidine + L-glutamate + ADP + phosphate + H(+)</text>
        <dbReference type="Rhea" id="RHEA:17129"/>
        <dbReference type="ChEBI" id="CHEBI:15377"/>
        <dbReference type="ChEBI" id="CHEBI:15378"/>
        <dbReference type="ChEBI" id="CHEBI:29985"/>
        <dbReference type="ChEBI" id="CHEBI:30616"/>
        <dbReference type="ChEBI" id="CHEBI:43474"/>
        <dbReference type="ChEBI" id="CHEBI:58359"/>
        <dbReference type="ChEBI" id="CHEBI:147286"/>
        <dbReference type="ChEBI" id="CHEBI:147287"/>
        <dbReference type="ChEBI" id="CHEBI:456216"/>
        <dbReference type="EC" id="6.3.5.3"/>
    </reaction>
</comment>
<comment type="pathway">
    <text evidence="1">Purine metabolism; IMP biosynthesis via de novo pathway; 5-amino-1-(5-phospho-D-ribosyl)imidazole from N(2)-formyl-N(1)-(5-phospho-D-ribosyl)glycinamide: step 1/2.</text>
</comment>
<comment type="subunit">
    <text evidence="1">Monomer.</text>
</comment>
<comment type="subcellular location">
    <subcellularLocation>
        <location evidence="1">Cytoplasm</location>
    </subcellularLocation>
</comment>
<comment type="similarity">
    <text evidence="1">In the N-terminal section; belongs to the FGAMS family.</text>
</comment>
<keyword id="KW-0067">ATP-binding</keyword>
<keyword id="KW-0963">Cytoplasm</keyword>
<keyword id="KW-0315">Glutamine amidotransferase</keyword>
<keyword id="KW-0436">Ligase</keyword>
<keyword id="KW-0460">Magnesium</keyword>
<keyword id="KW-0479">Metal-binding</keyword>
<keyword id="KW-0547">Nucleotide-binding</keyword>
<keyword id="KW-0658">Purine biosynthesis</keyword>
<gene>
    <name evidence="1" type="primary">purL</name>
    <name type="ordered locus">Patl_3113</name>
</gene>
<name>PUR4_PSEA6</name>